<proteinExistence type="inferred from homology"/>
<protein>
    <recommendedName>
        <fullName evidence="1">Tetraacyldisaccharide 4'-kinase</fullName>
        <ecNumber evidence="1">2.7.1.130</ecNumber>
    </recommendedName>
    <alternativeName>
        <fullName evidence="1">Lipid A 4'-kinase</fullName>
    </alternativeName>
</protein>
<evidence type="ECO:0000255" key="1">
    <source>
        <dbReference type="HAMAP-Rule" id="MF_00409"/>
    </source>
</evidence>
<sequence length="325" mass="36056">MNFWYSRSKIAYLLLPFSLLFWLISTIRRFLFQSGILSAYKAPVPVIVVGNLSVGGNGKTPVVIWLVQQLQMRGLNCGVISRGYGSQSEVYPLLVNAETDPVRGGDEPVLIAKRAGVPVCISPNRQQAIELLLSSYPCDVIVSDDGLQHYKLQRDIEIVVMDAVRGLGNGWVLPAGPLRELPSRLADADFIIGNGGENVYTDTAMRLVPHYAINLVTNEKRELNAFEQAIAIAGIGNPDRFFKMLQDEGIRLVSSQAFQDHQKFSADLFARFAPNVPLLMTEKDAVKCGRFAQQNWWYVPVDAEITGEKSAALLDKIEQMTQQGK</sequence>
<accession>A6VQ32</accession>
<name>LPXK_ACTSZ</name>
<comment type="function">
    <text evidence="1">Transfers the gamma-phosphate of ATP to the 4'-position of a tetraacyldisaccharide 1-phosphate intermediate (termed DS-1-P) to form tetraacyldisaccharide 1,4'-bis-phosphate (lipid IVA).</text>
</comment>
<comment type="catalytic activity">
    <reaction evidence="1">
        <text>a lipid A disaccharide + ATP = a lipid IVA + ADP + H(+)</text>
        <dbReference type="Rhea" id="RHEA:67840"/>
        <dbReference type="ChEBI" id="CHEBI:15378"/>
        <dbReference type="ChEBI" id="CHEBI:30616"/>
        <dbReference type="ChEBI" id="CHEBI:176343"/>
        <dbReference type="ChEBI" id="CHEBI:176425"/>
        <dbReference type="ChEBI" id="CHEBI:456216"/>
        <dbReference type="EC" id="2.7.1.130"/>
    </reaction>
</comment>
<comment type="pathway">
    <text evidence="1">Glycolipid biosynthesis; lipid IV(A) biosynthesis; lipid IV(A) from (3R)-3-hydroxytetradecanoyl-[acyl-carrier-protein] and UDP-N-acetyl-alpha-D-glucosamine: step 6/6.</text>
</comment>
<comment type="similarity">
    <text evidence="1">Belongs to the LpxK family.</text>
</comment>
<keyword id="KW-0067">ATP-binding</keyword>
<keyword id="KW-0418">Kinase</keyword>
<keyword id="KW-0441">Lipid A biosynthesis</keyword>
<keyword id="KW-0444">Lipid biosynthesis</keyword>
<keyword id="KW-0443">Lipid metabolism</keyword>
<keyword id="KW-0547">Nucleotide-binding</keyword>
<keyword id="KW-1185">Reference proteome</keyword>
<keyword id="KW-0808">Transferase</keyword>
<dbReference type="EC" id="2.7.1.130" evidence="1"/>
<dbReference type="EMBL" id="CP000746">
    <property type="protein sequence ID" value="ABR75079.1"/>
    <property type="molecule type" value="Genomic_DNA"/>
</dbReference>
<dbReference type="RefSeq" id="WP_012073456.1">
    <property type="nucleotide sequence ID" value="NC_009655.1"/>
</dbReference>
<dbReference type="SMR" id="A6VQ32"/>
<dbReference type="STRING" id="339671.Asuc_1727"/>
<dbReference type="KEGG" id="asu:Asuc_1727"/>
<dbReference type="eggNOG" id="COG1663">
    <property type="taxonomic scope" value="Bacteria"/>
</dbReference>
<dbReference type="HOGENOM" id="CLU_038816_2_0_6"/>
<dbReference type="OrthoDB" id="9766423at2"/>
<dbReference type="UniPathway" id="UPA00359">
    <property type="reaction ID" value="UER00482"/>
</dbReference>
<dbReference type="Proteomes" id="UP000001114">
    <property type="component" value="Chromosome"/>
</dbReference>
<dbReference type="GO" id="GO:0005886">
    <property type="term" value="C:plasma membrane"/>
    <property type="evidence" value="ECO:0007669"/>
    <property type="project" value="TreeGrafter"/>
</dbReference>
<dbReference type="GO" id="GO:0005524">
    <property type="term" value="F:ATP binding"/>
    <property type="evidence" value="ECO:0007669"/>
    <property type="project" value="UniProtKB-UniRule"/>
</dbReference>
<dbReference type="GO" id="GO:0009029">
    <property type="term" value="F:tetraacyldisaccharide 4'-kinase activity"/>
    <property type="evidence" value="ECO:0007669"/>
    <property type="project" value="UniProtKB-UniRule"/>
</dbReference>
<dbReference type="GO" id="GO:0009245">
    <property type="term" value="P:lipid A biosynthetic process"/>
    <property type="evidence" value="ECO:0007669"/>
    <property type="project" value="UniProtKB-UniRule"/>
</dbReference>
<dbReference type="GO" id="GO:0009244">
    <property type="term" value="P:lipopolysaccharide core region biosynthetic process"/>
    <property type="evidence" value="ECO:0007669"/>
    <property type="project" value="TreeGrafter"/>
</dbReference>
<dbReference type="HAMAP" id="MF_00409">
    <property type="entry name" value="LpxK"/>
    <property type="match status" value="1"/>
</dbReference>
<dbReference type="InterPro" id="IPR003758">
    <property type="entry name" value="LpxK"/>
</dbReference>
<dbReference type="InterPro" id="IPR027417">
    <property type="entry name" value="P-loop_NTPase"/>
</dbReference>
<dbReference type="NCBIfam" id="TIGR00682">
    <property type="entry name" value="lpxK"/>
    <property type="match status" value="1"/>
</dbReference>
<dbReference type="PANTHER" id="PTHR42724">
    <property type="entry name" value="TETRAACYLDISACCHARIDE 4'-KINASE"/>
    <property type="match status" value="1"/>
</dbReference>
<dbReference type="PANTHER" id="PTHR42724:SF1">
    <property type="entry name" value="TETRAACYLDISACCHARIDE 4'-KINASE, MITOCHONDRIAL-RELATED"/>
    <property type="match status" value="1"/>
</dbReference>
<dbReference type="Pfam" id="PF02606">
    <property type="entry name" value="LpxK"/>
    <property type="match status" value="1"/>
</dbReference>
<dbReference type="SUPFAM" id="SSF52540">
    <property type="entry name" value="P-loop containing nucleoside triphosphate hydrolases"/>
    <property type="match status" value="1"/>
</dbReference>
<feature type="chain" id="PRO_1000072273" description="Tetraacyldisaccharide 4'-kinase">
    <location>
        <begin position="1"/>
        <end position="325"/>
    </location>
</feature>
<feature type="binding site" evidence="1">
    <location>
        <begin position="53"/>
        <end position="60"/>
    </location>
    <ligand>
        <name>ATP</name>
        <dbReference type="ChEBI" id="CHEBI:30616"/>
    </ligand>
</feature>
<organism>
    <name type="scientific">Actinobacillus succinogenes (strain ATCC 55618 / DSM 22257 / CCUG 43843 / 130Z)</name>
    <dbReference type="NCBI Taxonomy" id="339671"/>
    <lineage>
        <taxon>Bacteria</taxon>
        <taxon>Pseudomonadati</taxon>
        <taxon>Pseudomonadota</taxon>
        <taxon>Gammaproteobacteria</taxon>
        <taxon>Pasteurellales</taxon>
        <taxon>Pasteurellaceae</taxon>
        <taxon>Actinobacillus</taxon>
    </lineage>
</organism>
<reference key="1">
    <citation type="journal article" date="2010" name="BMC Genomics">
        <title>A genomic perspective on the potential of Actinobacillus succinogenes for industrial succinate production.</title>
        <authorList>
            <person name="McKinlay J.B."/>
            <person name="Laivenieks M."/>
            <person name="Schindler B.D."/>
            <person name="McKinlay A.A."/>
            <person name="Siddaramappa S."/>
            <person name="Challacombe J.F."/>
            <person name="Lowry S.R."/>
            <person name="Clum A."/>
            <person name="Lapidus A.L."/>
            <person name="Burkhart K.B."/>
            <person name="Harkins V."/>
            <person name="Vieille C."/>
        </authorList>
    </citation>
    <scope>NUCLEOTIDE SEQUENCE [LARGE SCALE GENOMIC DNA]</scope>
    <source>
        <strain>ATCC 55618 / DSM 22257 / CCUG 43843 / 130Z</strain>
    </source>
</reference>
<gene>
    <name evidence="1" type="primary">lpxK</name>
    <name type="ordered locus">Asuc_1727</name>
</gene>